<feature type="chain" id="PRO_0000424712" description="Transcription factor MYB51">
    <location>
        <begin position="1"/>
        <end position="352"/>
    </location>
</feature>
<feature type="domain" description="HTH myb-type 1" evidence="1">
    <location>
        <begin position="10"/>
        <end position="62"/>
    </location>
</feature>
<feature type="domain" description="HTH myb-type 2" evidence="1">
    <location>
        <begin position="63"/>
        <end position="117"/>
    </location>
</feature>
<feature type="DNA-binding region" description="H-T-H motif" evidence="1">
    <location>
        <begin position="38"/>
        <end position="62"/>
    </location>
</feature>
<feature type="DNA-binding region" description="H-T-H motif" evidence="1">
    <location>
        <begin position="90"/>
        <end position="113"/>
    </location>
</feature>
<feature type="region of interest" description="Disordered" evidence="2">
    <location>
        <begin position="128"/>
        <end position="157"/>
    </location>
</feature>
<feature type="region of interest" description="Disordered" evidence="2">
    <location>
        <begin position="198"/>
        <end position="219"/>
    </location>
</feature>
<feature type="compositionally biased region" description="Low complexity" evidence="2">
    <location>
        <begin position="203"/>
        <end position="219"/>
    </location>
</feature>
<sequence length="352" mass="39154">MVRTPCCKAELGLKKGAWTPEEDQKLLSYLNRHGEGGWRTLPEKAGLKRCGKSCRLRWANYLRPDIKRGEFTEDEERSIISLHALHGNKWSAIARGLPGRTDNEIKNYWNTHIKKRLIKKGIDPVTHKGITSGTDKSENLPEKQNVNLTTSDHDLDNDKAKKNNKNFGLSSASFLNKVANRFGKRINQSVLSEIIGSGGPLASTSHTTNTTTTSVSVDSESVKSTSSSFAPTSNLLCHGTVATTPVSSNFDVDGNVNLTCSSSTFSDSSVNNPLMYCDNFVGNNNVDDEDTIGFSTFLNDEDFMMLEESCVENTAFMKELTRFLHEDENDVVDVTPVYERQDLFDEIDNYFG</sequence>
<reference key="1">
    <citation type="journal article" date="1998" name="Plant J.">
        <title>Towards functional characterisation of the members of the R2R3-MYB gene family from Arabidopsis thaliana.</title>
        <authorList>
            <person name="Kranz H.D."/>
            <person name="Denekamp M."/>
            <person name="Greco R."/>
            <person name="Jin H.-L."/>
            <person name="Leyva A."/>
            <person name="Meissner R.C."/>
            <person name="Petroni K."/>
            <person name="Urzainqui A."/>
            <person name="Bevan M."/>
            <person name="Martin C."/>
            <person name="Smeekens S."/>
            <person name="Tonelli C."/>
            <person name="Paz-Ares J."/>
            <person name="Weisshaar B."/>
        </authorList>
    </citation>
    <scope>NUCLEOTIDE SEQUENCE [MRNA]</scope>
    <source>
        <strain>cv. Columbia</strain>
    </source>
</reference>
<reference key="2">
    <citation type="submission" date="2004-01" db="EMBL/GenBank/DDBJ databases">
        <title>The MYB transcription factor family in Arabidopsis: a genome-wide cloning and expression pattern analysis.</title>
        <authorList>
            <person name="Qu L."/>
            <person name="Gu H."/>
        </authorList>
    </citation>
    <scope>NUCLEOTIDE SEQUENCE [MRNA]</scope>
</reference>
<reference key="3">
    <citation type="journal article" date="2000" name="Nature">
        <title>Sequence and analysis of chromosome 1 of the plant Arabidopsis thaliana.</title>
        <authorList>
            <person name="Theologis A."/>
            <person name="Ecker J.R."/>
            <person name="Palm C.J."/>
            <person name="Federspiel N.A."/>
            <person name="Kaul S."/>
            <person name="White O."/>
            <person name="Alonso J."/>
            <person name="Altafi H."/>
            <person name="Araujo R."/>
            <person name="Bowman C.L."/>
            <person name="Brooks S.Y."/>
            <person name="Buehler E."/>
            <person name="Chan A."/>
            <person name="Chao Q."/>
            <person name="Chen H."/>
            <person name="Cheuk R.F."/>
            <person name="Chin C.W."/>
            <person name="Chung M.K."/>
            <person name="Conn L."/>
            <person name="Conway A.B."/>
            <person name="Conway A.R."/>
            <person name="Creasy T.H."/>
            <person name="Dewar K."/>
            <person name="Dunn P."/>
            <person name="Etgu P."/>
            <person name="Feldblyum T.V."/>
            <person name="Feng J.-D."/>
            <person name="Fong B."/>
            <person name="Fujii C.Y."/>
            <person name="Gill J.E."/>
            <person name="Goldsmith A.D."/>
            <person name="Haas B."/>
            <person name="Hansen N.F."/>
            <person name="Hughes B."/>
            <person name="Huizar L."/>
            <person name="Hunter J.L."/>
            <person name="Jenkins J."/>
            <person name="Johnson-Hopson C."/>
            <person name="Khan S."/>
            <person name="Khaykin E."/>
            <person name="Kim C.J."/>
            <person name="Koo H.L."/>
            <person name="Kremenetskaia I."/>
            <person name="Kurtz D.B."/>
            <person name="Kwan A."/>
            <person name="Lam B."/>
            <person name="Langin-Hooper S."/>
            <person name="Lee A."/>
            <person name="Lee J.M."/>
            <person name="Lenz C.A."/>
            <person name="Li J.H."/>
            <person name="Li Y.-P."/>
            <person name="Lin X."/>
            <person name="Liu S.X."/>
            <person name="Liu Z.A."/>
            <person name="Luros J.S."/>
            <person name="Maiti R."/>
            <person name="Marziali A."/>
            <person name="Militscher J."/>
            <person name="Miranda M."/>
            <person name="Nguyen M."/>
            <person name="Nierman W.C."/>
            <person name="Osborne B.I."/>
            <person name="Pai G."/>
            <person name="Peterson J."/>
            <person name="Pham P.K."/>
            <person name="Rizzo M."/>
            <person name="Rooney T."/>
            <person name="Rowley D."/>
            <person name="Sakano H."/>
            <person name="Salzberg S.L."/>
            <person name="Schwartz J.R."/>
            <person name="Shinn P."/>
            <person name="Southwick A.M."/>
            <person name="Sun H."/>
            <person name="Tallon L.J."/>
            <person name="Tambunga G."/>
            <person name="Toriumi M.J."/>
            <person name="Town C.D."/>
            <person name="Utterback T."/>
            <person name="Van Aken S."/>
            <person name="Vaysberg M."/>
            <person name="Vysotskaia V.S."/>
            <person name="Walker M."/>
            <person name="Wu D."/>
            <person name="Yu G."/>
            <person name="Fraser C.M."/>
            <person name="Venter J.C."/>
            <person name="Davis R.W."/>
        </authorList>
    </citation>
    <scope>NUCLEOTIDE SEQUENCE [LARGE SCALE GENOMIC DNA]</scope>
    <source>
        <strain>cv. Columbia</strain>
    </source>
</reference>
<reference key="4">
    <citation type="journal article" date="2017" name="Plant J.">
        <title>Araport11: a complete reannotation of the Arabidopsis thaliana reference genome.</title>
        <authorList>
            <person name="Cheng C.Y."/>
            <person name="Krishnakumar V."/>
            <person name="Chan A.P."/>
            <person name="Thibaud-Nissen F."/>
            <person name="Schobel S."/>
            <person name="Town C.D."/>
        </authorList>
    </citation>
    <scope>GENOME REANNOTATION</scope>
    <source>
        <strain>cv. Columbia</strain>
    </source>
</reference>
<reference key="5">
    <citation type="journal article" date="2002" name="Science">
        <title>Functional annotation of a full-length Arabidopsis cDNA collection.</title>
        <authorList>
            <person name="Seki M."/>
            <person name="Narusaka M."/>
            <person name="Kamiya A."/>
            <person name="Ishida J."/>
            <person name="Satou M."/>
            <person name="Sakurai T."/>
            <person name="Nakajima M."/>
            <person name="Enju A."/>
            <person name="Akiyama K."/>
            <person name="Oono Y."/>
            <person name="Muramatsu M."/>
            <person name="Hayashizaki Y."/>
            <person name="Kawai J."/>
            <person name="Carninci P."/>
            <person name="Itoh M."/>
            <person name="Ishii Y."/>
            <person name="Arakawa T."/>
            <person name="Shibata K."/>
            <person name="Shinagawa A."/>
            <person name="Shinozaki K."/>
        </authorList>
    </citation>
    <scope>NUCLEOTIDE SEQUENCE [LARGE SCALE MRNA]</scope>
    <source>
        <strain>cv. Columbia</strain>
    </source>
</reference>
<reference key="6">
    <citation type="journal article" date="2003" name="Science">
        <title>Empirical analysis of transcriptional activity in the Arabidopsis genome.</title>
        <authorList>
            <person name="Yamada K."/>
            <person name="Lim J."/>
            <person name="Dale J.M."/>
            <person name="Chen H."/>
            <person name="Shinn P."/>
            <person name="Palm C.J."/>
            <person name="Southwick A.M."/>
            <person name="Wu H.C."/>
            <person name="Kim C.J."/>
            <person name="Nguyen M."/>
            <person name="Pham P.K."/>
            <person name="Cheuk R.F."/>
            <person name="Karlin-Newmann G."/>
            <person name="Liu S.X."/>
            <person name="Lam B."/>
            <person name="Sakano H."/>
            <person name="Wu T."/>
            <person name="Yu G."/>
            <person name="Miranda M."/>
            <person name="Quach H.L."/>
            <person name="Tripp M."/>
            <person name="Chang C.H."/>
            <person name="Lee J.M."/>
            <person name="Toriumi M.J."/>
            <person name="Chan M.M."/>
            <person name="Tang C.C."/>
            <person name="Onodera C.S."/>
            <person name="Deng J.M."/>
            <person name="Akiyama K."/>
            <person name="Ansari Y."/>
            <person name="Arakawa T."/>
            <person name="Banh J."/>
            <person name="Banno F."/>
            <person name="Bowser L."/>
            <person name="Brooks S.Y."/>
            <person name="Carninci P."/>
            <person name="Chao Q."/>
            <person name="Choy N."/>
            <person name="Enju A."/>
            <person name="Goldsmith A.D."/>
            <person name="Gurjal M."/>
            <person name="Hansen N.F."/>
            <person name="Hayashizaki Y."/>
            <person name="Johnson-Hopson C."/>
            <person name="Hsuan V.W."/>
            <person name="Iida K."/>
            <person name="Karnes M."/>
            <person name="Khan S."/>
            <person name="Koesema E."/>
            <person name="Ishida J."/>
            <person name="Jiang P.X."/>
            <person name="Jones T."/>
            <person name="Kawai J."/>
            <person name="Kamiya A."/>
            <person name="Meyers C."/>
            <person name="Nakajima M."/>
            <person name="Narusaka M."/>
            <person name="Seki M."/>
            <person name="Sakurai T."/>
            <person name="Satou M."/>
            <person name="Tamse R."/>
            <person name="Vaysberg M."/>
            <person name="Wallender E.K."/>
            <person name="Wong C."/>
            <person name="Yamamura Y."/>
            <person name="Yuan S."/>
            <person name="Shinozaki K."/>
            <person name="Davis R.W."/>
            <person name="Theologis A."/>
            <person name="Ecker J.R."/>
        </authorList>
    </citation>
    <scope>NUCLEOTIDE SEQUENCE [LARGE SCALE MRNA]</scope>
    <source>
        <strain>cv. Columbia</strain>
    </source>
</reference>
<reference key="7">
    <citation type="journal article" date="2001" name="Curr. Opin. Plant Biol.">
        <title>The R2R3-MYB gene family in Arabidopsis thaliana.</title>
        <authorList>
            <person name="Stracke R."/>
            <person name="Werber M."/>
            <person name="Weisshaar B."/>
        </authorList>
    </citation>
    <scope>GENE FAMILY</scope>
    <scope>NOMENCLATURE</scope>
    <source>
        <strain>cv. Columbia</strain>
    </source>
</reference>
<reference key="8">
    <citation type="journal article" date="2007" name="Plant J.">
        <title>The transcription factor HIG1/MYB51 regulates indolic glucosinolate biosynthesis in Arabidopsis thaliana.</title>
        <authorList>
            <person name="Gigolashvili T."/>
            <person name="Berger B."/>
            <person name="Mock H.P."/>
            <person name="Mueller C."/>
            <person name="Weisshaar B."/>
            <person name="Fluegge U.I."/>
        </authorList>
    </citation>
    <scope>FUNCTION</scope>
    <scope>DISRUPTION PHENOTYPE</scope>
    <scope>INDUCTION BY WOUNDING AND TOUCH</scope>
    <scope>SUBCELLULAR LOCATION</scope>
    <scope>TISSUE SPECIFICITY</scope>
</reference>
<reference key="9">
    <citation type="journal article" date="2012" name="Front. Plant Sci.">
        <title>Glucosinolates are produced in trichomes of Arabidopsis thaliana.</title>
        <authorList>
            <person name="Frerigmann H."/>
            <person name="Boettcher C."/>
            <person name="Baatout D."/>
            <person name="Gigolashvili T."/>
        </authorList>
    </citation>
    <scope>TISSUE SPECIFICITY</scope>
    <scope>INDUCTION BY WOUNDING</scope>
    <source>
        <strain>cv. Columbia</strain>
    </source>
</reference>
<reference key="10">
    <citation type="journal article" date="2013" name="J. Exp. Bot.">
        <title>BZR1 and BES1 participate in regulation of glucosinolate biosynthesis by brassinosteroids in Arabidopsis.</title>
        <authorList>
            <person name="Guo R."/>
            <person name="Qian H."/>
            <person name="Shen W."/>
            <person name="Liu L."/>
            <person name="Zhang M."/>
            <person name="Cai C."/>
            <person name="Zhao Y."/>
            <person name="Qiao J."/>
            <person name="Wang Q."/>
        </authorList>
    </citation>
    <scope>FUNCTION</scope>
    <scope>DISRUPTION PHENOTYPE</scope>
</reference>
<reference key="11">
    <citation type="journal article" date="2013" name="Plant Cell">
        <title>Arabidopsis basic helix-loop-helix transcription factors MYC2, MYC3, and MYC4 regulate glucosinolate biosynthesis, insect performance, and feeding behavior.</title>
        <authorList>
            <person name="Schweizer F."/>
            <person name="Fernandez-Calvo P."/>
            <person name="Zander M."/>
            <person name="Diez-Diaz M."/>
            <person name="Fonseca S."/>
            <person name="Glauser G."/>
            <person name="Lewsey M.G."/>
            <person name="Ecker J.R."/>
            <person name="Solano R."/>
            <person name="Reymond P."/>
        </authorList>
    </citation>
    <scope>FUNCTION</scope>
    <scope>INTERACTION WITH MYC2; MYC3 AND MYC4</scope>
</reference>
<evidence type="ECO:0000255" key="1">
    <source>
        <dbReference type="PROSITE-ProRule" id="PRU00625"/>
    </source>
</evidence>
<evidence type="ECO:0000256" key="2">
    <source>
        <dbReference type="SAM" id="MobiDB-lite"/>
    </source>
</evidence>
<evidence type="ECO:0000269" key="3">
    <source>
    </source>
</evidence>
<evidence type="ECO:0000269" key="4">
    <source>
    </source>
</evidence>
<evidence type="ECO:0000269" key="5">
    <source>
    </source>
</evidence>
<evidence type="ECO:0000269" key="6">
    <source>
    </source>
</evidence>
<accession>O49782</accession>
<keyword id="KW-0010">Activator</keyword>
<keyword id="KW-0238">DNA-binding</keyword>
<keyword id="KW-0539">Nucleus</keyword>
<keyword id="KW-1185">Reference proteome</keyword>
<keyword id="KW-0677">Repeat</keyword>
<keyword id="KW-0804">Transcription</keyword>
<keyword id="KW-0805">Transcription regulation</keyword>
<protein>
    <recommendedName>
        <fullName>Transcription factor MYB51</fullName>
    </recommendedName>
    <alternativeName>
        <fullName>Myb-related protein 51</fullName>
        <shortName>AtMYB51</shortName>
    </alternativeName>
    <alternativeName>
        <fullName>Protein HIGH INDOLIC GLUCOSINOLATE 1</fullName>
    </alternativeName>
    <alternativeName>
        <fullName>Transcription factor HIG1</fullName>
    </alternativeName>
</protein>
<proteinExistence type="evidence at protein level"/>
<name>MYB51_ARATH</name>
<gene>
    <name type="primary">MYB51</name>
    <name type="synonym">HIG1</name>
    <name type="ordered locus">At1g18570</name>
    <name type="ORF">F25I16.9</name>
</gene>
<comment type="function">
    <text evidence="3 5 6">Transcription factor positively regulating indolic glucosinolate biosynthetic pathway genes.</text>
</comment>
<comment type="subunit">
    <text>Can form complexes with MYC2, MYC3 or MYC4.</text>
</comment>
<comment type="subcellular location">
    <subcellularLocation>
        <location evidence="1 3">Nucleus</location>
    </subcellularLocation>
</comment>
<comment type="tissue specificity">
    <text evidence="3 4">Expressed in vegetative parts of the plant, mainly in mature rosette leaves and in trichomes. Detected in roots, but not in mature flowers or siliques.</text>
</comment>
<comment type="induction">
    <text evidence="3 4">Up-regulated by touch or wounding.</text>
</comment>
<comment type="disruption phenotype">
    <text evidence="3 5">Low levels of indolic glucosinolates.</text>
</comment>
<organism>
    <name type="scientific">Arabidopsis thaliana</name>
    <name type="common">Mouse-ear cress</name>
    <dbReference type="NCBI Taxonomy" id="3702"/>
    <lineage>
        <taxon>Eukaryota</taxon>
        <taxon>Viridiplantae</taxon>
        <taxon>Streptophyta</taxon>
        <taxon>Embryophyta</taxon>
        <taxon>Tracheophyta</taxon>
        <taxon>Spermatophyta</taxon>
        <taxon>Magnoliopsida</taxon>
        <taxon>eudicotyledons</taxon>
        <taxon>Gunneridae</taxon>
        <taxon>Pentapetalae</taxon>
        <taxon>rosids</taxon>
        <taxon>malvids</taxon>
        <taxon>Brassicales</taxon>
        <taxon>Brassicaceae</taxon>
        <taxon>Camelineae</taxon>
        <taxon>Arabidopsis</taxon>
    </lineage>
</organism>
<dbReference type="EMBL" id="AF062887">
    <property type="protein sequence ID" value="AAC83609.1"/>
    <property type="molecule type" value="mRNA"/>
</dbReference>
<dbReference type="EMBL" id="AY519555">
    <property type="protein sequence ID" value="AAS10025.1"/>
    <property type="molecule type" value="mRNA"/>
</dbReference>
<dbReference type="EMBL" id="AC026238">
    <property type="protein sequence ID" value="AAF98417.1"/>
    <property type="molecule type" value="Genomic_DNA"/>
</dbReference>
<dbReference type="EMBL" id="CP002684">
    <property type="protein sequence ID" value="AEE29730.1"/>
    <property type="molecule type" value="Genomic_DNA"/>
</dbReference>
<dbReference type="EMBL" id="AK117331">
    <property type="protein sequence ID" value="BAC42001.1"/>
    <property type="molecule type" value="mRNA"/>
</dbReference>
<dbReference type="EMBL" id="BT006244">
    <property type="protein sequence ID" value="AAP12893.1"/>
    <property type="molecule type" value="mRNA"/>
</dbReference>
<dbReference type="PIR" id="T51659">
    <property type="entry name" value="T51659"/>
</dbReference>
<dbReference type="RefSeq" id="NP_173292.1">
    <property type="nucleotide sequence ID" value="NM_101715.4"/>
</dbReference>
<dbReference type="SMR" id="O49782"/>
<dbReference type="BioGRID" id="23677">
    <property type="interactions" value="53"/>
</dbReference>
<dbReference type="FunCoup" id="O49782">
    <property type="interactions" value="6"/>
</dbReference>
<dbReference type="IntAct" id="O49782">
    <property type="interactions" value="2"/>
</dbReference>
<dbReference type="STRING" id="3702.O49782"/>
<dbReference type="PaxDb" id="3702-AT1G18570.1"/>
<dbReference type="EnsemblPlants" id="AT1G18570.1">
    <property type="protein sequence ID" value="AT1G18570.1"/>
    <property type="gene ID" value="AT1G18570"/>
</dbReference>
<dbReference type="GeneID" id="838438"/>
<dbReference type="Gramene" id="AT1G18570.1">
    <property type="protein sequence ID" value="AT1G18570.1"/>
    <property type="gene ID" value="AT1G18570"/>
</dbReference>
<dbReference type="KEGG" id="ath:AT1G18570"/>
<dbReference type="Araport" id="AT1G18570"/>
<dbReference type="TAIR" id="AT1G18570">
    <property type="gene designation" value="MYB51"/>
</dbReference>
<dbReference type="eggNOG" id="KOG0048">
    <property type="taxonomic scope" value="Eukaryota"/>
</dbReference>
<dbReference type="HOGENOM" id="CLU_028567_6_1_1"/>
<dbReference type="InParanoid" id="O49782"/>
<dbReference type="OMA" id="NLLCHGT"/>
<dbReference type="OrthoDB" id="2143914at2759"/>
<dbReference type="PhylomeDB" id="O49782"/>
<dbReference type="PRO" id="PR:O49782"/>
<dbReference type="Proteomes" id="UP000006548">
    <property type="component" value="Chromosome 1"/>
</dbReference>
<dbReference type="ExpressionAtlas" id="O49782">
    <property type="expression patterns" value="baseline and differential"/>
</dbReference>
<dbReference type="GO" id="GO:0005634">
    <property type="term" value="C:nucleus"/>
    <property type="evidence" value="ECO:0007669"/>
    <property type="project" value="UniProtKB-SubCell"/>
</dbReference>
<dbReference type="GO" id="GO:0003700">
    <property type="term" value="F:DNA-binding transcription factor activity"/>
    <property type="evidence" value="ECO:0000250"/>
    <property type="project" value="TAIR"/>
</dbReference>
<dbReference type="GO" id="GO:0000976">
    <property type="term" value="F:transcription cis-regulatory region binding"/>
    <property type="evidence" value="ECO:0000353"/>
    <property type="project" value="TAIR"/>
</dbReference>
<dbReference type="GO" id="GO:0052544">
    <property type="term" value="P:defense response by callose deposition in cell wall"/>
    <property type="evidence" value="ECO:0000315"/>
    <property type="project" value="TAIR"/>
</dbReference>
<dbReference type="GO" id="GO:0042742">
    <property type="term" value="P:defense response to bacterium"/>
    <property type="evidence" value="ECO:0000315"/>
    <property type="project" value="TAIR"/>
</dbReference>
<dbReference type="GO" id="GO:0009759">
    <property type="term" value="P:indole glucosinolate biosynthetic process"/>
    <property type="evidence" value="ECO:0000315"/>
    <property type="project" value="TAIR"/>
</dbReference>
<dbReference type="GO" id="GO:0009682">
    <property type="term" value="P:induced systemic resistance"/>
    <property type="evidence" value="ECO:0000315"/>
    <property type="project" value="TAIR"/>
</dbReference>
<dbReference type="GO" id="GO:0009617">
    <property type="term" value="P:response to bacterium"/>
    <property type="evidence" value="ECO:0000315"/>
    <property type="project" value="TAIR"/>
</dbReference>
<dbReference type="GO" id="GO:0009625">
    <property type="term" value="P:response to insect"/>
    <property type="evidence" value="ECO:0000270"/>
    <property type="project" value="TAIR"/>
</dbReference>
<dbReference type="CDD" id="cd00167">
    <property type="entry name" value="SANT"/>
    <property type="match status" value="2"/>
</dbReference>
<dbReference type="FunFam" id="1.10.10.60:FF:000873">
    <property type="match status" value="1"/>
</dbReference>
<dbReference type="FunFam" id="1.10.10.60:FF:000001">
    <property type="entry name" value="MYB-related transcription factor"/>
    <property type="match status" value="1"/>
</dbReference>
<dbReference type="Gene3D" id="1.10.10.60">
    <property type="entry name" value="Homeodomain-like"/>
    <property type="match status" value="2"/>
</dbReference>
<dbReference type="InterPro" id="IPR009057">
    <property type="entry name" value="Homeodomain-like_sf"/>
</dbReference>
<dbReference type="InterPro" id="IPR017930">
    <property type="entry name" value="Myb_dom"/>
</dbReference>
<dbReference type="InterPro" id="IPR015495">
    <property type="entry name" value="Myb_TF_plants"/>
</dbReference>
<dbReference type="InterPro" id="IPR001005">
    <property type="entry name" value="SANT/Myb"/>
</dbReference>
<dbReference type="PANTHER" id="PTHR10641">
    <property type="entry name" value="MYB FAMILY TRANSCRIPTION FACTOR"/>
    <property type="match status" value="1"/>
</dbReference>
<dbReference type="PANTHER" id="PTHR10641:SF1309">
    <property type="entry name" value="TRANSCRIPTION FACTOR MYB51"/>
    <property type="match status" value="1"/>
</dbReference>
<dbReference type="Pfam" id="PF00249">
    <property type="entry name" value="Myb_DNA-binding"/>
    <property type="match status" value="2"/>
</dbReference>
<dbReference type="SMART" id="SM00717">
    <property type="entry name" value="SANT"/>
    <property type="match status" value="2"/>
</dbReference>
<dbReference type="SUPFAM" id="SSF46689">
    <property type="entry name" value="Homeodomain-like"/>
    <property type="match status" value="1"/>
</dbReference>
<dbReference type="PROSITE" id="PS51294">
    <property type="entry name" value="HTH_MYB"/>
    <property type="match status" value="2"/>
</dbReference>